<gene>
    <name evidence="1" type="primary">fliT</name>
    <name type="ordered locus">SG1093</name>
</gene>
<keyword id="KW-1005">Bacterial flagellum biogenesis</keyword>
<keyword id="KW-0143">Chaperone</keyword>
<keyword id="KW-0963">Cytoplasm</keyword>
<keyword id="KW-0678">Repressor</keyword>
<keyword id="KW-0804">Transcription</keyword>
<keyword id="KW-0805">Transcription regulation</keyword>
<accession>B5R7H0</accession>
<dbReference type="EMBL" id="AM933173">
    <property type="protein sequence ID" value="CAR36978.1"/>
    <property type="molecule type" value="Genomic_DNA"/>
</dbReference>
<dbReference type="RefSeq" id="WP_000204900.1">
    <property type="nucleotide sequence ID" value="NC_011274.1"/>
</dbReference>
<dbReference type="SMR" id="B5R7H0"/>
<dbReference type="KEGG" id="seg:SG1093"/>
<dbReference type="HOGENOM" id="CLU_155793_1_0_6"/>
<dbReference type="Proteomes" id="UP000008321">
    <property type="component" value="Chromosome"/>
</dbReference>
<dbReference type="GO" id="GO:0005829">
    <property type="term" value="C:cytosol"/>
    <property type="evidence" value="ECO:0007669"/>
    <property type="project" value="UniProtKB-SubCell"/>
</dbReference>
<dbReference type="GO" id="GO:0044781">
    <property type="term" value="P:bacterial-type flagellum organization"/>
    <property type="evidence" value="ECO:0007669"/>
    <property type="project" value="UniProtKB-KW"/>
</dbReference>
<dbReference type="GO" id="GO:1902209">
    <property type="term" value="P:negative regulation of bacterial-type flagellum assembly"/>
    <property type="evidence" value="ECO:0007669"/>
    <property type="project" value="UniProtKB-UniRule"/>
</dbReference>
<dbReference type="GO" id="GO:0006457">
    <property type="term" value="P:protein folding"/>
    <property type="evidence" value="ECO:0007669"/>
    <property type="project" value="UniProtKB-UniRule"/>
</dbReference>
<dbReference type="FunFam" id="1.20.58.380:FF:000002">
    <property type="entry name" value="Flagellar protein FliT"/>
    <property type="match status" value="1"/>
</dbReference>
<dbReference type="Gene3D" id="1.20.58.380">
    <property type="entry name" value="Flagellar protein flit"/>
    <property type="match status" value="1"/>
</dbReference>
<dbReference type="HAMAP" id="MF_01180">
    <property type="entry name" value="FliT"/>
    <property type="match status" value="1"/>
</dbReference>
<dbReference type="InterPro" id="IPR008622">
    <property type="entry name" value="FliT"/>
</dbReference>
<dbReference type="NCBIfam" id="NF007836">
    <property type="entry name" value="PRK10548.1"/>
    <property type="match status" value="1"/>
</dbReference>
<dbReference type="Pfam" id="PF05400">
    <property type="entry name" value="FliT"/>
    <property type="match status" value="1"/>
</dbReference>
<reference key="1">
    <citation type="journal article" date="2008" name="Genome Res.">
        <title>Comparative genome analysis of Salmonella enteritidis PT4 and Salmonella gallinarum 287/91 provides insights into evolutionary and host adaptation pathways.</title>
        <authorList>
            <person name="Thomson N.R."/>
            <person name="Clayton D.J."/>
            <person name="Windhorst D."/>
            <person name="Vernikos G."/>
            <person name="Davidson S."/>
            <person name="Churcher C."/>
            <person name="Quail M.A."/>
            <person name="Stevens M."/>
            <person name="Jones M.A."/>
            <person name="Watson M."/>
            <person name="Barron A."/>
            <person name="Layton A."/>
            <person name="Pickard D."/>
            <person name="Kingsley R.A."/>
            <person name="Bignell A."/>
            <person name="Clark L."/>
            <person name="Harris B."/>
            <person name="Ormond D."/>
            <person name="Abdellah Z."/>
            <person name="Brooks K."/>
            <person name="Cherevach I."/>
            <person name="Chillingworth T."/>
            <person name="Woodward J."/>
            <person name="Norberczak H."/>
            <person name="Lord A."/>
            <person name="Arrowsmith C."/>
            <person name="Jagels K."/>
            <person name="Moule S."/>
            <person name="Mungall K."/>
            <person name="Saunders M."/>
            <person name="Whitehead S."/>
            <person name="Chabalgoity J.A."/>
            <person name="Maskell D."/>
            <person name="Humphreys T."/>
            <person name="Roberts M."/>
            <person name="Barrow P.A."/>
            <person name="Dougan G."/>
            <person name="Parkhill J."/>
        </authorList>
    </citation>
    <scope>NUCLEOTIDE SEQUENCE [LARGE SCALE GENOMIC DNA]</scope>
    <source>
        <strain>287/91 / NCTC 13346</strain>
    </source>
</reference>
<name>FLIT_SALG2</name>
<protein>
    <recommendedName>
        <fullName evidence="1">Flagellar protein FliT</fullName>
    </recommendedName>
</protein>
<sequence length="122" mass="13754">MTSTVEFINRWQRIALLSQSLLELAQRGEWDLLLQQEVSYLQSIETVMEKQTPPGITRSIQDMVAGYIKQTLDNEQLLKGLLQQRLDELSSLIGQSTRQKSLNYAYGRLSGMLLVPDAPGAS</sequence>
<comment type="function">
    <text evidence="1">Dual-function protein that regulates the transcription of class 2 flagellar operons and that also acts as an export chaperone for the filament-capping protein FliD. As a transcriptional regulator, acts as an anti-FlhDC factor; it directly binds FlhC, thus inhibiting the binding of the FlhC/FlhD complex to class 2 promoters, resulting in decreased expression of class 2 flagellar operons. As a chaperone, effects FliD transition to the membrane by preventing its premature polymerization, and by directing it to the export apparatus.</text>
</comment>
<comment type="subunit">
    <text evidence="1">Homodimer. Interacts with FliD and FlhC.</text>
</comment>
<comment type="subcellular location">
    <subcellularLocation>
        <location evidence="1">Cytoplasm</location>
        <location evidence="1">Cytosol</location>
    </subcellularLocation>
</comment>
<comment type="similarity">
    <text evidence="1">Belongs to the FliT family.</text>
</comment>
<proteinExistence type="inferred from homology"/>
<organism>
    <name type="scientific">Salmonella gallinarum (strain 287/91 / NCTC 13346)</name>
    <dbReference type="NCBI Taxonomy" id="550538"/>
    <lineage>
        <taxon>Bacteria</taxon>
        <taxon>Pseudomonadati</taxon>
        <taxon>Pseudomonadota</taxon>
        <taxon>Gammaproteobacteria</taxon>
        <taxon>Enterobacterales</taxon>
        <taxon>Enterobacteriaceae</taxon>
        <taxon>Salmonella</taxon>
    </lineage>
</organism>
<evidence type="ECO:0000255" key="1">
    <source>
        <dbReference type="HAMAP-Rule" id="MF_01180"/>
    </source>
</evidence>
<feature type="chain" id="PRO_1000138183" description="Flagellar protein FliT">
    <location>
        <begin position="1"/>
        <end position="122"/>
    </location>
</feature>
<feature type="region of interest" description="Required for homodimerization" evidence="1">
    <location>
        <begin position="1"/>
        <end position="50"/>
    </location>
</feature>
<feature type="region of interest" description="FliD binding" evidence="1">
    <location>
        <begin position="60"/>
        <end position="98"/>
    </location>
</feature>